<gene>
    <name evidence="1" type="primary">psbI</name>
</gene>
<keyword id="KW-0150">Chloroplast</keyword>
<keyword id="KW-0472">Membrane</keyword>
<keyword id="KW-0602">Photosynthesis</keyword>
<keyword id="KW-0604">Photosystem II</keyword>
<keyword id="KW-0934">Plastid</keyword>
<keyword id="KW-0674">Reaction center</keyword>
<keyword id="KW-1185">Reference proteome</keyword>
<keyword id="KW-0793">Thylakoid</keyword>
<keyword id="KW-0812">Transmembrane</keyword>
<keyword id="KW-1133">Transmembrane helix</keyword>
<dbReference type="EMBL" id="DQ424856">
    <property type="protein sequence ID" value="ABE47518.1"/>
    <property type="molecule type" value="Genomic_DNA"/>
</dbReference>
<dbReference type="RefSeq" id="YP_567060.1">
    <property type="nucleotide sequence ID" value="NC_007957.1"/>
</dbReference>
<dbReference type="SMR" id="Q0ZJ36"/>
<dbReference type="FunCoup" id="Q0ZJ36">
    <property type="interactions" value="60"/>
</dbReference>
<dbReference type="STRING" id="29760.Q0ZJ36"/>
<dbReference type="GeneID" id="4025109"/>
<dbReference type="KEGG" id="vvi:4025109"/>
<dbReference type="InParanoid" id="Q0ZJ36"/>
<dbReference type="OrthoDB" id="724916at71240"/>
<dbReference type="Proteomes" id="UP000009183">
    <property type="component" value="Chloroplast"/>
</dbReference>
<dbReference type="GO" id="GO:0009535">
    <property type="term" value="C:chloroplast thylakoid membrane"/>
    <property type="evidence" value="ECO:0007669"/>
    <property type="project" value="UniProtKB-SubCell"/>
</dbReference>
<dbReference type="GO" id="GO:0009539">
    <property type="term" value="C:photosystem II reaction center"/>
    <property type="evidence" value="ECO:0007669"/>
    <property type="project" value="InterPro"/>
</dbReference>
<dbReference type="GO" id="GO:0015979">
    <property type="term" value="P:photosynthesis"/>
    <property type="evidence" value="ECO:0007669"/>
    <property type="project" value="UniProtKB-UniRule"/>
</dbReference>
<dbReference type="HAMAP" id="MF_01316">
    <property type="entry name" value="PSII_PsbI"/>
    <property type="match status" value="1"/>
</dbReference>
<dbReference type="InterPro" id="IPR003686">
    <property type="entry name" value="PSII_PsbI"/>
</dbReference>
<dbReference type="InterPro" id="IPR037271">
    <property type="entry name" value="PSII_PsbI_sf"/>
</dbReference>
<dbReference type="NCBIfam" id="NF002735">
    <property type="entry name" value="PRK02655.1"/>
    <property type="match status" value="1"/>
</dbReference>
<dbReference type="PANTHER" id="PTHR35772">
    <property type="entry name" value="PHOTOSYSTEM II REACTION CENTER PROTEIN I"/>
    <property type="match status" value="1"/>
</dbReference>
<dbReference type="PANTHER" id="PTHR35772:SF1">
    <property type="entry name" value="PHOTOSYSTEM II REACTION CENTER PROTEIN I"/>
    <property type="match status" value="1"/>
</dbReference>
<dbReference type="Pfam" id="PF02532">
    <property type="entry name" value="PsbI"/>
    <property type="match status" value="1"/>
</dbReference>
<dbReference type="SUPFAM" id="SSF161041">
    <property type="entry name" value="Photosystem II reaction center protein I, PsbI"/>
    <property type="match status" value="1"/>
</dbReference>
<feature type="chain" id="PRO_0000275815" description="Photosystem II reaction center protein I">
    <location>
        <begin position="1"/>
        <end position="36"/>
    </location>
</feature>
<feature type="transmembrane region" description="Helical" evidence="1">
    <location>
        <begin position="4"/>
        <end position="24"/>
    </location>
</feature>
<evidence type="ECO:0000255" key="1">
    <source>
        <dbReference type="HAMAP-Rule" id="MF_01316"/>
    </source>
</evidence>
<proteinExistence type="inferred from homology"/>
<organism>
    <name type="scientific">Vitis vinifera</name>
    <name type="common">Grape</name>
    <dbReference type="NCBI Taxonomy" id="29760"/>
    <lineage>
        <taxon>Eukaryota</taxon>
        <taxon>Viridiplantae</taxon>
        <taxon>Streptophyta</taxon>
        <taxon>Embryophyta</taxon>
        <taxon>Tracheophyta</taxon>
        <taxon>Spermatophyta</taxon>
        <taxon>Magnoliopsida</taxon>
        <taxon>eudicotyledons</taxon>
        <taxon>Gunneridae</taxon>
        <taxon>Pentapetalae</taxon>
        <taxon>rosids</taxon>
        <taxon>Vitales</taxon>
        <taxon>Vitaceae</taxon>
        <taxon>Viteae</taxon>
        <taxon>Vitis</taxon>
    </lineage>
</organism>
<reference key="1">
    <citation type="journal article" date="2006" name="BMC Evol. Biol.">
        <title>Phylogenetic analyses of Vitis (Vitaceae) based on complete chloroplast genome sequences: effects of taxon sampling and phylogenetic methods on resolving relationships among rosids.</title>
        <authorList>
            <person name="Jansen R.K."/>
            <person name="Kaittanis C."/>
            <person name="Lee S.-B."/>
            <person name="Saski C."/>
            <person name="Tomkins J."/>
            <person name="Alverson A.J."/>
            <person name="Daniell H."/>
        </authorList>
    </citation>
    <scope>NUCLEOTIDE SEQUENCE [LARGE SCALE GENOMIC DNA]</scope>
    <source>
        <strain>cv. Maxxa</strain>
    </source>
</reference>
<sequence length="36" mass="4168">MLTLKLFVYTVVIFFVSLFIFGFLSNDPGRNPGREE</sequence>
<geneLocation type="chloroplast"/>
<protein>
    <recommendedName>
        <fullName evidence="1">Photosystem II reaction center protein I</fullName>
        <shortName evidence="1">PSII-I</shortName>
    </recommendedName>
    <alternativeName>
        <fullName evidence="1">PSII 4.8 kDa protein</fullName>
    </alternativeName>
</protein>
<comment type="function">
    <text evidence="1">One of the components of the core complex of photosystem II (PSII), required for its stability and/or assembly. PSII is a light-driven water:plastoquinone oxidoreductase that uses light energy to abstract electrons from H(2)O, generating O(2) and a proton gradient subsequently used for ATP formation. It consists of a core antenna complex that captures photons, and an electron transfer chain that converts photonic excitation into a charge separation.</text>
</comment>
<comment type="subunit">
    <text evidence="1">PSII is composed of 1 copy each of membrane proteins PsbA, PsbB, PsbC, PsbD, PsbE, PsbF, PsbH, PsbI, PsbJ, PsbK, PsbL, PsbM, PsbT, PsbX, PsbY, PsbZ, Psb30/Ycf12, at least 3 peripheral proteins of the oxygen-evolving complex and a large number of cofactors. It forms dimeric complexes.</text>
</comment>
<comment type="subcellular location">
    <subcellularLocation>
        <location evidence="1">Plastid</location>
        <location evidence="1">Chloroplast thylakoid membrane</location>
        <topology evidence="1">Single-pass membrane protein</topology>
    </subcellularLocation>
</comment>
<comment type="similarity">
    <text evidence="1">Belongs to the PsbI family.</text>
</comment>
<name>PSBI_VITVI</name>
<accession>Q0ZJ36</accession>